<protein>
    <recommendedName>
        <fullName evidence="1">Fructose-1,6-bisphosphatase class 1</fullName>
        <shortName evidence="1">FBPase class 1</shortName>
        <ecNumber evidence="1">3.1.3.11</ecNumber>
    </recommendedName>
    <alternativeName>
        <fullName evidence="1">D-fructose-1,6-bisphosphate 1-phosphohydrolase class 1</fullName>
    </alternativeName>
</protein>
<reference key="1">
    <citation type="journal article" date="2008" name="J. Bacteriol.">
        <title>Complete genome sequence of Neisseria gonorrhoeae NCCP11945.</title>
        <authorList>
            <person name="Chung G.T."/>
            <person name="Yoo J.S."/>
            <person name="Oh H.B."/>
            <person name="Lee Y.S."/>
            <person name="Cha S.H."/>
            <person name="Kim S.J."/>
            <person name="Yoo C.K."/>
        </authorList>
    </citation>
    <scope>NUCLEOTIDE SEQUENCE [LARGE SCALE GENOMIC DNA]</scope>
    <source>
        <strain>NCCP11945</strain>
    </source>
</reference>
<dbReference type="EC" id="3.1.3.11" evidence="1"/>
<dbReference type="EMBL" id="CP001050">
    <property type="protein sequence ID" value="ACF29621.1"/>
    <property type="status" value="ALT_INIT"/>
    <property type="molecule type" value="Genomic_DNA"/>
</dbReference>
<dbReference type="RefSeq" id="WP_003691115.1">
    <property type="nucleotide sequence ID" value="NC_011035.1"/>
</dbReference>
<dbReference type="SMR" id="B4RLD4"/>
<dbReference type="KEGG" id="ngk:NGK_0944"/>
<dbReference type="HOGENOM" id="CLU_039977_0_0_4"/>
<dbReference type="UniPathway" id="UPA00138"/>
<dbReference type="Proteomes" id="UP000002564">
    <property type="component" value="Chromosome"/>
</dbReference>
<dbReference type="GO" id="GO:0005829">
    <property type="term" value="C:cytosol"/>
    <property type="evidence" value="ECO:0007669"/>
    <property type="project" value="TreeGrafter"/>
</dbReference>
<dbReference type="GO" id="GO:0042132">
    <property type="term" value="F:fructose 1,6-bisphosphate 1-phosphatase activity"/>
    <property type="evidence" value="ECO:0007669"/>
    <property type="project" value="UniProtKB-UniRule"/>
</dbReference>
<dbReference type="GO" id="GO:0000287">
    <property type="term" value="F:magnesium ion binding"/>
    <property type="evidence" value="ECO:0007669"/>
    <property type="project" value="UniProtKB-UniRule"/>
</dbReference>
<dbReference type="GO" id="GO:0030388">
    <property type="term" value="P:fructose 1,6-bisphosphate metabolic process"/>
    <property type="evidence" value="ECO:0007669"/>
    <property type="project" value="TreeGrafter"/>
</dbReference>
<dbReference type="GO" id="GO:0006002">
    <property type="term" value="P:fructose 6-phosphate metabolic process"/>
    <property type="evidence" value="ECO:0007669"/>
    <property type="project" value="TreeGrafter"/>
</dbReference>
<dbReference type="GO" id="GO:0006000">
    <property type="term" value="P:fructose metabolic process"/>
    <property type="evidence" value="ECO:0007669"/>
    <property type="project" value="TreeGrafter"/>
</dbReference>
<dbReference type="GO" id="GO:0006094">
    <property type="term" value="P:gluconeogenesis"/>
    <property type="evidence" value="ECO:0007669"/>
    <property type="project" value="UniProtKB-UniRule"/>
</dbReference>
<dbReference type="GO" id="GO:0005986">
    <property type="term" value="P:sucrose biosynthetic process"/>
    <property type="evidence" value="ECO:0007669"/>
    <property type="project" value="TreeGrafter"/>
</dbReference>
<dbReference type="CDD" id="cd00354">
    <property type="entry name" value="FBPase"/>
    <property type="match status" value="1"/>
</dbReference>
<dbReference type="FunFam" id="3.30.540.10:FF:000006">
    <property type="entry name" value="Fructose-1,6-bisphosphatase class 1"/>
    <property type="match status" value="1"/>
</dbReference>
<dbReference type="FunFam" id="3.40.190.80:FF:000011">
    <property type="entry name" value="Fructose-1,6-bisphosphatase class 1"/>
    <property type="match status" value="1"/>
</dbReference>
<dbReference type="Gene3D" id="3.40.190.80">
    <property type="match status" value="1"/>
</dbReference>
<dbReference type="Gene3D" id="3.30.540.10">
    <property type="entry name" value="Fructose-1,6-Bisphosphatase, subunit A, domain 1"/>
    <property type="match status" value="1"/>
</dbReference>
<dbReference type="HAMAP" id="MF_01855">
    <property type="entry name" value="FBPase_class1"/>
    <property type="match status" value="1"/>
</dbReference>
<dbReference type="InterPro" id="IPR044015">
    <property type="entry name" value="FBPase_C_dom"/>
</dbReference>
<dbReference type="InterPro" id="IPR000146">
    <property type="entry name" value="FBPase_class-1"/>
</dbReference>
<dbReference type="InterPro" id="IPR033391">
    <property type="entry name" value="FBPase_N"/>
</dbReference>
<dbReference type="InterPro" id="IPR028343">
    <property type="entry name" value="FBPtase"/>
</dbReference>
<dbReference type="NCBIfam" id="NF006779">
    <property type="entry name" value="PRK09293.1-3"/>
    <property type="match status" value="1"/>
</dbReference>
<dbReference type="NCBIfam" id="NF006780">
    <property type="entry name" value="PRK09293.1-4"/>
    <property type="match status" value="1"/>
</dbReference>
<dbReference type="PANTHER" id="PTHR11556">
    <property type="entry name" value="FRUCTOSE-1,6-BISPHOSPHATASE-RELATED"/>
    <property type="match status" value="1"/>
</dbReference>
<dbReference type="PANTHER" id="PTHR11556:SF35">
    <property type="entry name" value="SEDOHEPTULOSE-1,7-BISPHOSPHATASE, CHLOROPLASTIC"/>
    <property type="match status" value="1"/>
</dbReference>
<dbReference type="Pfam" id="PF00316">
    <property type="entry name" value="FBPase"/>
    <property type="match status" value="1"/>
</dbReference>
<dbReference type="Pfam" id="PF18913">
    <property type="entry name" value="FBPase_C"/>
    <property type="match status" value="1"/>
</dbReference>
<dbReference type="PIRSF" id="PIRSF500210">
    <property type="entry name" value="FBPtase"/>
    <property type="match status" value="1"/>
</dbReference>
<dbReference type="PIRSF" id="PIRSF000904">
    <property type="entry name" value="FBPtase_SBPase"/>
    <property type="match status" value="1"/>
</dbReference>
<dbReference type="PRINTS" id="PR00115">
    <property type="entry name" value="F16BPHPHTASE"/>
</dbReference>
<dbReference type="SUPFAM" id="SSF56655">
    <property type="entry name" value="Carbohydrate phosphatase"/>
    <property type="match status" value="1"/>
</dbReference>
<sequence>MDTLTRFLPEHLQQNQLPEALGGVLLSVVSACTEINAKVRLGALAGVLGMAGTGNIQGEDQKKLDVIANNIMIDTLKANPAVAGLASEEEDTFVSAGENGRYLVLFDPLDGSSNIDVNISVGTIFSILAKPEGALATESFLQTGRQQLAAGYVLYGPQTQLVFTFGHGVYVFTLNAENEFVLTKENPKVPESTKEFAINMSNRRHWLPPVQQYVDELLAGETGTRGKNYNMRWVASMVAEIHRILMRGGVFMYLQDKRDPSKPGKLRLMYEANPMALILEQAGASASNAYQAMLDIQPESLHQRVAVIMGSSEEVDYLNRLHSK</sequence>
<feature type="chain" id="PRO_0000364606" description="Fructose-1,6-bisphosphatase class 1">
    <location>
        <begin position="1"/>
        <end position="324"/>
    </location>
</feature>
<feature type="binding site" evidence="1">
    <location>
        <position position="88"/>
    </location>
    <ligand>
        <name>Mg(2+)</name>
        <dbReference type="ChEBI" id="CHEBI:18420"/>
        <label>1</label>
    </ligand>
</feature>
<feature type="binding site" evidence="1">
    <location>
        <position position="107"/>
    </location>
    <ligand>
        <name>Mg(2+)</name>
        <dbReference type="ChEBI" id="CHEBI:18420"/>
        <label>1</label>
    </ligand>
</feature>
<feature type="binding site" evidence="1">
    <location>
        <position position="107"/>
    </location>
    <ligand>
        <name>Mg(2+)</name>
        <dbReference type="ChEBI" id="CHEBI:18420"/>
        <label>2</label>
    </ligand>
</feature>
<feature type="binding site" evidence="1">
    <location>
        <position position="109"/>
    </location>
    <ligand>
        <name>Mg(2+)</name>
        <dbReference type="ChEBI" id="CHEBI:18420"/>
        <label>1</label>
    </ligand>
</feature>
<feature type="binding site" evidence="1">
    <location>
        <begin position="110"/>
        <end position="113"/>
    </location>
    <ligand>
        <name>substrate</name>
    </ligand>
</feature>
<feature type="binding site" evidence="1">
    <location>
        <position position="110"/>
    </location>
    <ligand>
        <name>Mg(2+)</name>
        <dbReference type="ChEBI" id="CHEBI:18420"/>
        <label>2</label>
    </ligand>
</feature>
<feature type="binding site" evidence="1">
    <location>
        <position position="199"/>
    </location>
    <ligand>
        <name>substrate</name>
    </ligand>
</feature>
<feature type="binding site" evidence="1">
    <location>
        <position position="265"/>
    </location>
    <ligand>
        <name>substrate</name>
    </ligand>
</feature>
<feature type="binding site" evidence="1">
    <location>
        <position position="271"/>
    </location>
    <ligand>
        <name>Mg(2+)</name>
        <dbReference type="ChEBI" id="CHEBI:18420"/>
        <label>2</label>
    </ligand>
</feature>
<comment type="catalytic activity">
    <reaction evidence="1">
        <text>beta-D-fructose 1,6-bisphosphate + H2O = beta-D-fructose 6-phosphate + phosphate</text>
        <dbReference type="Rhea" id="RHEA:11064"/>
        <dbReference type="ChEBI" id="CHEBI:15377"/>
        <dbReference type="ChEBI" id="CHEBI:32966"/>
        <dbReference type="ChEBI" id="CHEBI:43474"/>
        <dbReference type="ChEBI" id="CHEBI:57634"/>
        <dbReference type="EC" id="3.1.3.11"/>
    </reaction>
</comment>
<comment type="cofactor">
    <cofactor evidence="1">
        <name>Mg(2+)</name>
        <dbReference type="ChEBI" id="CHEBI:18420"/>
    </cofactor>
    <text evidence="1">Binds 2 magnesium ions per subunit.</text>
</comment>
<comment type="pathway">
    <text evidence="1">Carbohydrate biosynthesis; gluconeogenesis.</text>
</comment>
<comment type="subunit">
    <text evidence="1">Homotetramer.</text>
</comment>
<comment type="subcellular location">
    <subcellularLocation>
        <location evidence="1">Cytoplasm</location>
    </subcellularLocation>
</comment>
<comment type="similarity">
    <text evidence="1">Belongs to the FBPase class 1 family.</text>
</comment>
<comment type="sequence caution" evidence="2">
    <conflict type="erroneous initiation">
        <sequence resource="EMBL-CDS" id="ACF29621"/>
    </conflict>
</comment>
<accession>B4RLD4</accession>
<gene>
    <name evidence="1" type="primary">fbp</name>
    <name type="ordered locus">NGK_0944</name>
</gene>
<proteinExistence type="inferred from homology"/>
<name>F16PA_NEIG2</name>
<keyword id="KW-0119">Carbohydrate metabolism</keyword>
<keyword id="KW-0963">Cytoplasm</keyword>
<keyword id="KW-0378">Hydrolase</keyword>
<keyword id="KW-0460">Magnesium</keyword>
<keyword id="KW-0479">Metal-binding</keyword>
<organism>
    <name type="scientific">Neisseria gonorrhoeae (strain NCCP11945)</name>
    <dbReference type="NCBI Taxonomy" id="521006"/>
    <lineage>
        <taxon>Bacteria</taxon>
        <taxon>Pseudomonadati</taxon>
        <taxon>Pseudomonadota</taxon>
        <taxon>Betaproteobacteria</taxon>
        <taxon>Neisseriales</taxon>
        <taxon>Neisseriaceae</taxon>
        <taxon>Neisseria</taxon>
    </lineage>
</organism>
<evidence type="ECO:0000255" key="1">
    <source>
        <dbReference type="HAMAP-Rule" id="MF_01855"/>
    </source>
</evidence>
<evidence type="ECO:0000305" key="2"/>